<protein>
    <recommendedName>
        <fullName evidence="1">Large ribosomal subunit protein bL17</fullName>
    </recommendedName>
    <alternativeName>
        <fullName evidence="2">50S ribosomal protein L17</fullName>
    </alternativeName>
</protein>
<name>RL17_ECOL6</name>
<keyword id="KW-1185">Reference proteome</keyword>
<keyword id="KW-0687">Ribonucleoprotein</keyword>
<keyword id="KW-0689">Ribosomal protein</keyword>
<feature type="chain" id="PRO_0000175526" description="Large ribosomal subunit protein bL17">
    <location>
        <begin position="1"/>
        <end position="127"/>
    </location>
</feature>
<organism>
    <name type="scientific">Escherichia coli O6:H1 (strain CFT073 / ATCC 700928 / UPEC)</name>
    <dbReference type="NCBI Taxonomy" id="199310"/>
    <lineage>
        <taxon>Bacteria</taxon>
        <taxon>Pseudomonadati</taxon>
        <taxon>Pseudomonadota</taxon>
        <taxon>Gammaproteobacteria</taxon>
        <taxon>Enterobacterales</taxon>
        <taxon>Enterobacteriaceae</taxon>
        <taxon>Escherichia</taxon>
    </lineage>
</organism>
<comment type="subunit">
    <text evidence="1">Part of the 50S ribosomal subunit. Contacts protein L32.</text>
</comment>
<comment type="similarity">
    <text evidence="1">Belongs to the bacterial ribosomal protein bL17 family.</text>
</comment>
<proteinExistence type="inferred from homology"/>
<sequence length="127" mass="14365">MRHRKSGRQLNRNSSHRQAMFRNMAGSLVRHEIIKTTLPKAKELRRVVEPLITLAKTDSVANRRLAFARTRDNEIVAKLFNELGPRFASRAGGYTRILKCGFRAGDNAPMAYIELVDRSEKAEAAAE</sequence>
<gene>
    <name evidence="1" type="primary">rplQ</name>
    <name type="ordered locus">c4055</name>
</gene>
<dbReference type="EMBL" id="AE014075">
    <property type="protein sequence ID" value="AAN82493.1"/>
    <property type="molecule type" value="Genomic_DNA"/>
</dbReference>
<dbReference type="RefSeq" id="WP_001216368.1">
    <property type="nucleotide sequence ID" value="NZ_CP051263.1"/>
</dbReference>
<dbReference type="SMR" id="P0AG45"/>
<dbReference type="STRING" id="199310.c4055"/>
<dbReference type="GeneID" id="97442834"/>
<dbReference type="KEGG" id="ecc:c4055"/>
<dbReference type="eggNOG" id="COG0203">
    <property type="taxonomic scope" value="Bacteria"/>
</dbReference>
<dbReference type="HOGENOM" id="CLU_074407_2_0_6"/>
<dbReference type="BioCyc" id="ECOL199310:C4055-MONOMER"/>
<dbReference type="Proteomes" id="UP000001410">
    <property type="component" value="Chromosome"/>
</dbReference>
<dbReference type="GO" id="GO:0022625">
    <property type="term" value="C:cytosolic large ribosomal subunit"/>
    <property type="evidence" value="ECO:0007669"/>
    <property type="project" value="TreeGrafter"/>
</dbReference>
<dbReference type="GO" id="GO:0003735">
    <property type="term" value="F:structural constituent of ribosome"/>
    <property type="evidence" value="ECO:0007669"/>
    <property type="project" value="InterPro"/>
</dbReference>
<dbReference type="GO" id="GO:0006412">
    <property type="term" value="P:translation"/>
    <property type="evidence" value="ECO:0007669"/>
    <property type="project" value="UniProtKB-UniRule"/>
</dbReference>
<dbReference type="FunFam" id="3.90.1030.10:FF:000001">
    <property type="entry name" value="50S ribosomal protein L17"/>
    <property type="match status" value="1"/>
</dbReference>
<dbReference type="Gene3D" id="3.90.1030.10">
    <property type="entry name" value="Ribosomal protein L17"/>
    <property type="match status" value="1"/>
</dbReference>
<dbReference type="HAMAP" id="MF_01368">
    <property type="entry name" value="Ribosomal_bL17"/>
    <property type="match status" value="1"/>
</dbReference>
<dbReference type="InterPro" id="IPR000456">
    <property type="entry name" value="Ribosomal_bL17"/>
</dbReference>
<dbReference type="InterPro" id="IPR047859">
    <property type="entry name" value="Ribosomal_bL17_CS"/>
</dbReference>
<dbReference type="InterPro" id="IPR036373">
    <property type="entry name" value="Ribosomal_bL17_sf"/>
</dbReference>
<dbReference type="NCBIfam" id="TIGR00059">
    <property type="entry name" value="L17"/>
    <property type="match status" value="1"/>
</dbReference>
<dbReference type="PANTHER" id="PTHR14413:SF16">
    <property type="entry name" value="LARGE RIBOSOMAL SUBUNIT PROTEIN BL17M"/>
    <property type="match status" value="1"/>
</dbReference>
<dbReference type="PANTHER" id="PTHR14413">
    <property type="entry name" value="RIBOSOMAL PROTEIN L17"/>
    <property type="match status" value="1"/>
</dbReference>
<dbReference type="Pfam" id="PF01196">
    <property type="entry name" value="Ribosomal_L17"/>
    <property type="match status" value="1"/>
</dbReference>
<dbReference type="SUPFAM" id="SSF64263">
    <property type="entry name" value="Prokaryotic ribosomal protein L17"/>
    <property type="match status" value="1"/>
</dbReference>
<dbReference type="PROSITE" id="PS01167">
    <property type="entry name" value="RIBOSOMAL_L17"/>
    <property type="match status" value="1"/>
</dbReference>
<reference key="1">
    <citation type="journal article" date="2002" name="Proc. Natl. Acad. Sci. U.S.A.">
        <title>Extensive mosaic structure revealed by the complete genome sequence of uropathogenic Escherichia coli.</title>
        <authorList>
            <person name="Welch R.A."/>
            <person name="Burland V."/>
            <person name="Plunkett G. III"/>
            <person name="Redford P."/>
            <person name="Roesch P."/>
            <person name="Rasko D."/>
            <person name="Buckles E.L."/>
            <person name="Liou S.-R."/>
            <person name="Boutin A."/>
            <person name="Hackett J."/>
            <person name="Stroud D."/>
            <person name="Mayhew G.F."/>
            <person name="Rose D.J."/>
            <person name="Zhou S."/>
            <person name="Schwartz D.C."/>
            <person name="Perna N.T."/>
            <person name="Mobley H.L.T."/>
            <person name="Donnenberg M.S."/>
            <person name="Blattner F.R."/>
        </authorList>
    </citation>
    <scope>NUCLEOTIDE SEQUENCE [LARGE SCALE GENOMIC DNA]</scope>
    <source>
        <strain>CFT073 / ATCC 700928 / UPEC</strain>
    </source>
</reference>
<accession>P0AG45</accession>
<accession>P02416</accession>
<evidence type="ECO:0000255" key="1">
    <source>
        <dbReference type="HAMAP-Rule" id="MF_01368"/>
    </source>
</evidence>
<evidence type="ECO:0000305" key="2"/>